<accession>P33585</accession>
<comment type="function">
    <text>May be a p-aminobenzoic acid-CoA ligase that activates PabA to start the biosynthesis of candicidin.</text>
</comment>
<comment type="pathway">
    <text>Antibiotic biosynthesis; candicidin biosynthesis.</text>
</comment>
<comment type="similarity">
    <text evidence="1">Belongs to the ATP-dependent AMP-binding enzyme family.</text>
</comment>
<reference key="1">
    <citation type="journal article" date="1993" name="Gene">
        <title>The pab gene of Streptomyces griseus, encoding p-aminobenzoic acid synthase, is located between genes possibly involved in candicidin biosynthesis.</title>
        <authorList>
            <person name="Criado L.M."/>
            <person name="Martin J.F."/>
            <person name="Gil J.A."/>
        </authorList>
    </citation>
    <scope>NUCLEOTIDE SEQUENCE [GENOMIC DNA]</scope>
    <source>
        <strain>IMRU 3570</strain>
    </source>
</reference>
<organism>
    <name type="scientific">Streptomyces griseus</name>
    <dbReference type="NCBI Taxonomy" id="1911"/>
    <lineage>
        <taxon>Bacteria</taxon>
        <taxon>Bacillati</taxon>
        <taxon>Actinomycetota</taxon>
        <taxon>Actinomycetes</taxon>
        <taxon>Kitasatosporales</taxon>
        <taxon>Streptomycetaceae</taxon>
        <taxon>Streptomyces</taxon>
    </lineage>
</organism>
<protein>
    <recommendedName>
        <fullName>Protein Y</fullName>
    </recommendedName>
    <alternativeName>
        <fullName>ORF-3</fullName>
    </alternativeName>
</protein>
<keyword id="KW-0045">Antibiotic biosynthesis</keyword>
<keyword id="KW-0436">Ligase</keyword>
<name>PABL_STRGR</name>
<evidence type="ECO:0000305" key="1"/>
<sequence>MVPVHAHDYVTDPPSTTGRTLDGLTLPRVFADAVHRGGDAVALVDGEYALTWSAWRTAVDALARGLQESGVVSGDVVALHLPNSWEYLTLHLAAASVGAVTMPVHQGNAPSDVRALLERVRPAAVVLTARTQEGGGPLTGPALREVLPELRAVLVTGDAAGEGTETVTEMLERWSGEDPLPVEVRPDSPFLLLPSSGTTSARPKICLHSHEGLLTNSRAATEDTADAYAGTLITACPLTHCFGLQSAYSALFRAGRQVLLSGWDVGRFLELARRERPSVVVAVPASCTTWSPGCARTRTAPASARPD</sequence>
<dbReference type="EMBL" id="M93058">
    <property type="status" value="NOT_ANNOTATED_CDS"/>
    <property type="molecule type" value="Unassigned_DNA"/>
</dbReference>
<dbReference type="PIR" id="PN0470">
    <property type="entry name" value="PN0470"/>
</dbReference>
<dbReference type="SMR" id="P33585"/>
<dbReference type="UniPathway" id="UPA00101"/>
<dbReference type="GO" id="GO:0016405">
    <property type="term" value="F:CoA-ligase activity"/>
    <property type="evidence" value="ECO:0007669"/>
    <property type="project" value="TreeGrafter"/>
</dbReference>
<dbReference type="GO" id="GO:0017000">
    <property type="term" value="P:antibiotic biosynthetic process"/>
    <property type="evidence" value="ECO:0007669"/>
    <property type="project" value="UniProtKB-KW"/>
</dbReference>
<dbReference type="Gene3D" id="3.40.50.12780">
    <property type="entry name" value="N-terminal domain of ligase-like"/>
    <property type="match status" value="1"/>
</dbReference>
<dbReference type="InterPro" id="IPR000873">
    <property type="entry name" value="AMP-dep_synth/lig_dom"/>
</dbReference>
<dbReference type="InterPro" id="IPR042099">
    <property type="entry name" value="ANL_N_sf"/>
</dbReference>
<dbReference type="PANTHER" id="PTHR24096">
    <property type="entry name" value="LONG-CHAIN-FATTY-ACID--COA LIGASE"/>
    <property type="match status" value="1"/>
</dbReference>
<dbReference type="PANTHER" id="PTHR24096:SF267">
    <property type="entry name" value="MALONATE--COA LIGASE ACSF3, MITOCHONDRIAL"/>
    <property type="match status" value="1"/>
</dbReference>
<dbReference type="Pfam" id="PF00501">
    <property type="entry name" value="AMP-binding"/>
    <property type="match status" value="1"/>
</dbReference>
<dbReference type="SUPFAM" id="SSF56801">
    <property type="entry name" value="Acetyl-CoA synthetase-like"/>
    <property type="match status" value="1"/>
</dbReference>
<feature type="chain" id="PRO_0000193179" description="Protein Y">
    <location>
        <begin position="1"/>
        <end position="307" status="greater than"/>
    </location>
</feature>
<feature type="non-terminal residue">
    <location>
        <position position="307"/>
    </location>
</feature>
<proteinExistence type="inferred from homology"/>